<accession>A8EYL5</accession>
<sequence length="41" mass="4847">MKVVSSLKSLKKRDKDCQIVKRRGKIFVINKKKKRFKAKQG</sequence>
<keyword id="KW-0687">Ribonucleoprotein</keyword>
<keyword id="KW-0689">Ribosomal protein</keyword>
<protein>
    <recommendedName>
        <fullName evidence="1">Large ribosomal subunit protein bL36</fullName>
    </recommendedName>
    <alternativeName>
        <fullName evidence="2">50S ribosomal protein L36</fullName>
    </alternativeName>
</protein>
<evidence type="ECO:0000255" key="1">
    <source>
        <dbReference type="HAMAP-Rule" id="MF_00251"/>
    </source>
</evidence>
<evidence type="ECO:0000305" key="2"/>
<comment type="similarity">
    <text evidence="1">Belongs to the bacterial ribosomal protein bL36 family.</text>
</comment>
<feature type="chain" id="PRO_1000003411" description="Large ribosomal subunit protein bL36">
    <location>
        <begin position="1"/>
        <end position="41"/>
    </location>
</feature>
<name>RL36_RICCK</name>
<organism>
    <name type="scientific">Rickettsia canadensis (strain McKiel)</name>
    <dbReference type="NCBI Taxonomy" id="293613"/>
    <lineage>
        <taxon>Bacteria</taxon>
        <taxon>Pseudomonadati</taxon>
        <taxon>Pseudomonadota</taxon>
        <taxon>Alphaproteobacteria</taxon>
        <taxon>Rickettsiales</taxon>
        <taxon>Rickettsiaceae</taxon>
        <taxon>Rickettsieae</taxon>
        <taxon>Rickettsia</taxon>
        <taxon>belli group</taxon>
    </lineage>
</organism>
<gene>
    <name evidence="1" type="primary">rpmJ</name>
    <name type="ordered locus">A1E_02515</name>
</gene>
<proteinExistence type="inferred from homology"/>
<reference key="1">
    <citation type="submission" date="2007-09" db="EMBL/GenBank/DDBJ databases">
        <title>Complete genome sequence of Rickettsia canadensis.</title>
        <authorList>
            <person name="Madan A."/>
            <person name="Fahey J."/>
            <person name="Helton E."/>
            <person name="Ketteman M."/>
            <person name="Madan A."/>
            <person name="Rodrigues S."/>
            <person name="Sanchez A."/>
            <person name="Whiting M."/>
            <person name="Dasch G."/>
            <person name="Eremeeva M."/>
        </authorList>
    </citation>
    <scope>NUCLEOTIDE SEQUENCE [LARGE SCALE GENOMIC DNA]</scope>
    <source>
        <strain>McKiel</strain>
    </source>
</reference>
<dbReference type="EMBL" id="CP000409">
    <property type="protein sequence ID" value="ABV73448.1"/>
    <property type="molecule type" value="Genomic_DNA"/>
</dbReference>
<dbReference type="RefSeq" id="WP_012148645.1">
    <property type="nucleotide sequence ID" value="NC_009879.1"/>
</dbReference>
<dbReference type="SMR" id="A8EYL5"/>
<dbReference type="STRING" id="293613.A1E_02515"/>
<dbReference type="KEGG" id="rcm:A1E_02515"/>
<dbReference type="eggNOG" id="COG0257">
    <property type="taxonomic scope" value="Bacteria"/>
</dbReference>
<dbReference type="HOGENOM" id="CLU_135723_3_2_5"/>
<dbReference type="Proteomes" id="UP000007056">
    <property type="component" value="Chromosome"/>
</dbReference>
<dbReference type="GO" id="GO:1990904">
    <property type="term" value="C:ribonucleoprotein complex"/>
    <property type="evidence" value="ECO:0007669"/>
    <property type="project" value="UniProtKB-KW"/>
</dbReference>
<dbReference type="GO" id="GO:0005840">
    <property type="term" value="C:ribosome"/>
    <property type="evidence" value="ECO:0007669"/>
    <property type="project" value="UniProtKB-KW"/>
</dbReference>
<dbReference type="GO" id="GO:0003735">
    <property type="term" value="F:structural constituent of ribosome"/>
    <property type="evidence" value="ECO:0007669"/>
    <property type="project" value="InterPro"/>
</dbReference>
<dbReference type="GO" id="GO:0006412">
    <property type="term" value="P:translation"/>
    <property type="evidence" value="ECO:0007669"/>
    <property type="project" value="UniProtKB-UniRule"/>
</dbReference>
<dbReference type="HAMAP" id="MF_00251">
    <property type="entry name" value="Ribosomal_bL36"/>
    <property type="match status" value="1"/>
</dbReference>
<dbReference type="InterPro" id="IPR000473">
    <property type="entry name" value="Ribosomal_bL36"/>
</dbReference>
<dbReference type="InterPro" id="IPR035977">
    <property type="entry name" value="Ribosomal_bL36_sp"/>
</dbReference>
<dbReference type="InterPro" id="IPR047621">
    <property type="entry name" value="Ribosomal_L36_bact"/>
</dbReference>
<dbReference type="NCBIfam" id="NF002021">
    <property type="entry name" value="PRK00831.1"/>
    <property type="match status" value="1"/>
</dbReference>
<dbReference type="PANTHER" id="PTHR47781">
    <property type="entry name" value="50S RIBOSOMAL PROTEIN L36 2"/>
    <property type="match status" value="1"/>
</dbReference>
<dbReference type="PANTHER" id="PTHR47781:SF1">
    <property type="entry name" value="LARGE RIBOSOMAL SUBUNIT PROTEIN BL36B"/>
    <property type="match status" value="1"/>
</dbReference>
<dbReference type="Pfam" id="PF00444">
    <property type="entry name" value="Ribosomal_L36"/>
    <property type="match status" value="1"/>
</dbReference>
<dbReference type="SUPFAM" id="SSF57840">
    <property type="entry name" value="Ribosomal protein L36"/>
    <property type="match status" value="1"/>
</dbReference>
<dbReference type="PROSITE" id="PS00828">
    <property type="entry name" value="RIBOSOMAL_L36"/>
    <property type="match status" value="1"/>
</dbReference>